<feature type="chain" id="PRO_0000313735" description="Interleukin-1 receptor-associated kinase 1-binding protein 1 homolog">
    <location>
        <begin position="1"/>
        <end position="249"/>
    </location>
</feature>
<name>IKBP1_DANRE</name>
<gene>
    <name type="primary">irak1bp1</name>
    <name type="ORF">zgc:112481</name>
</gene>
<comment type="function">
    <text evidence="1">May be part of a signaling pathway that leads to NF-kappa-B activation.</text>
</comment>
<comment type="subcellular location">
    <subcellularLocation>
        <location evidence="1">Cytoplasm</location>
    </subcellularLocation>
    <subcellularLocation>
        <location evidence="1">Nucleus</location>
    </subcellularLocation>
</comment>
<comment type="similarity">
    <text evidence="2">Belongs to the IRAK1BP1 family.</text>
</comment>
<proteinExistence type="evidence at transcript level"/>
<organism>
    <name type="scientific">Danio rerio</name>
    <name type="common">Zebrafish</name>
    <name type="synonym">Brachydanio rerio</name>
    <dbReference type="NCBI Taxonomy" id="7955"/>
    <lineage>
        <taxon>Eukaryota</taxon>
        <taxon>Metazoa</taxon>
        <taxon>Chordata</taxon>
        <taxon>Craniata</taxon>
        <taxon>Vertebrata</taxon>
        <taxon>Euteleostomi</taxon>
        <taxon>Actinopterygii</taxon>
        <taxon>Neopterygii</taxon>
        <taxon>Teleostei</taxon>
        <taxon>Ostariophysi</taxon>
        <taxon>Cypriniformes</taxon>
        <taxon>Danionidae</taxon>
        <taxon>Danioninae</taxon>
        <taxon>Danio</taxon>
    </lineage>
</organism>
<keyword id="KW-0963">Cytoplasm</keyword>
<keyword id="KW-0539">Nucleus</keyword>
<keyword id="KW-1185">Reference proteome</keyword>
<protein>
    <recommendedName>
        <fullName>Interleukin-1 receptor-associated kinase 1-binding protein 1 homolog</fullName>
    </recommendedName>
</protein>
<evidence type="ECO:0000250" key="1"/>
<evidence type="ECO:0000305" key="2"/>
<dbReference type="EMBL" id="BC095828">
    <property type="protein sequence ID" value="AAH95828.1"/>
    <property type="molecule type" value="mRNA"/>
</dbReference>
<dbReference type="RefSeq" id="NP_001018607.1">
    <property type="nucleotide sequence ID" value="NM_001020771.1"/>
</dbReference>
<dbReference type="SMR" id="Q501X6"/>
<dbReference type="FunCoup" id="Q501X6">
    <property type="interactions" value="673"/>
</dbReference>
<dbReference type="STRING" id="7955.ENSDARP00000053587"/>
<dbReference type="PaxDb" id="7955-ENSDARP00000053587"/>
<dbReference type="GeneID" id="553809"/>
<dbReference type="KEGG" id="dre:553809"/>
<dbReference type="AGR" id="ZFIN:ZDB-GENE-050522-272"/>
<dbReference type="CTD" id="134728"/>
<dbReference type="ZFIN" id="ZDB-GENE-050522-272">
    <property type="gene designation" value="irak1bp1"/>
</dbReference>
<dbReference type="eggNOG" id="ENOG502QVHT">
    <property type="taxonomic scope" value="Eukaryota"/>
</dbReference>
<dbReference type="InParanoid" id="Q501X6"/>
<dbReference type="OrthoDB" id="6365554at2759"/>
<dbReference type="PhylomeDB" id="Q501X6"/>
<dbReference type="PRO" id="PR:Q501X6"/>
<dbReference type="Proteomes" id="UP000000437">
    <property type="component" value="Alternate scaffold 23"/>
</dbReference>
<dbReference type="Proteomes" id="UP000000437">
    <property type="component" value="Chromosome 23"/>
</dbReference>
<dbReference type="GO" id="GO:0005737">
    <property type="term" value="C:cytoplasm"/>
    <property type="evidence" value="ECO:0007669"/>
    <property type="project" value="UniProtKB-SubCell"/>
</dbReference>
<dbReference type="GO" id="GO:0005634">
    <property type="term" value="C:nucleus"/>
    <property type="evidence" value="ECO:0007669"/>
    <property type="project" value="UniProtKB-SubCell"/>
</dbReference>
<dbReference type="GO" id="GO:0006955">
    <property type="term" value="P:immune response"/>
    <property type="evidence" value="ECO:0007669"/>
    <property type="project" value="InterPro"/>
</dbReference>
<dbReference type="GO" id="GO:0043123">
    <property type="term" value="P:positive regulation of canonical NF-kappaB signal transduction"/>
    <property type="evidence" value="ECO:0007669"/>
    <property type="project" value="InterPro"/>
</dbReference>
<dbReference type="Gene3D" id="3.30.110.170">
    <property type="entry name" value="Protein of unknown function (DUF541), domain 1"/>
    <property type="match status" value="1"/>
</dbReference>
<dbReference type="Gene3D" id="3.30.70.2970">
    <property type="entry name" value="Protein of unknown function (DUF541), domain 2"/>
    <property type="match status" value="1"/>
</dbReference>
<dbReference type="InterPro" id="IPR030312">
    <property type="entry name" value="IRAK1BP1"/>
</dbReference>
<dbReference type="InterPro" id="IPR007497">
    <property type="entry name" value="SIMPL/DUF541"/>
</dbReference>
<dbReference type="PANTHER" id="PTHR18842">
    <property type="entry name" value="INTERLEUKIN-1 RECEPTOR-ASSOCIATED KINASE 1-BINDING PROTEIN 1"/>
    <property type="match status" value="1"/>
</dbReference>
<dbReference type="PANTHER" id="PTHR18842:SF2">
    <property type="entry name" value="INTERLEUKIN-1 RECEPTOR-ASSOCIATED KINASE 1-BINDING PROTEIN 1"/>
    <property type="match status" value="1"/>
</dbReference>
<dbReference type="Pfam" id="PF04402">
    <property type="entry name" value="SIMPL"/>
    <property type="match status" value="1"/>
</dbReference>
<reference key="1">
    <citation type="submission" date="2005-05" db="EMBL/GenBank/DDBJ databases">
        <authorList>
            <consortium name="NIH - Zebrafish Gene Collection (ZGC) project"/>
        </authorList>
    </citation>
    <scope>NUCLEOTIDE SEQUENCE [LARGE SCALE MRNA]</scope>
    <source>
        <tissue>Olfactory epithelium</tissue>
    </source>
</reference>
<accession>Q501X6</accession>
<sequence length="249" mass="28063">MAHSPSRVFAALSPSAGDVYRDENQSVFNRGRKQTHLSAQSNVRVIEVTGCAEISSPPDRACVSISVKNSKENVNDVTNSVTRRLEYILQTARQHDVKEENITVTKHLQRDEDLFHMQAEVLVVFLDFEKMQQARTVLIEKLDKSVCVGDPYYSHSAESLSLLRRRVCLEAVDNARLKASEACCTLGQALGRPLLVREEESREWSSSQQDASGSPLTLHPRTDATLISATSRMFVTFELRPKDNNRRKF</sequence>